<sequence>MRLELLVVLLVGLAALAPSGSTCCKTEPPRCETEPPRCETEPPRCETEPPRCETEPPRCETTTPKCETTPPTCRTEPPTCKTEPPTCRTEPPTCKTKPPTCRTEPPTCRTEPPTCKTKPPTCKTEPPTCKTEPPTCRTEPPTCKTEPPTCRTEPPTCKTEPPTCKTEPPTCKTEPPCEKHCTKRIKRHRTKRTKRSKSTKKIVHHHNRPGTTPESGCGCGSKNESGGGGSGCILKDLLTPKCPDSKPKPQASPKCKSDPKPKAASKTTSKPKPKACDSGKKNTTKKPRKTQPQKGGC</sequence>
<name>SGS4_DROME</name>
<feature type="signal peptide" evidence="1">
    <location>
        <begin position="1"/>
        <end position="21"/>
    </location>
</feature>
<feature type="chain" id="PRO_0000022332" description="Salivary glue protein Sgs-4">
    <location>
        <begin position="22"/>
        <end position="297"/>
    </location>
</feature>
<feature type="repeat" description="1">
    <location>
        <begin position="26"/>
        <end position="32"/>
    </location>
</feature>
<feature type="repeat" description="2">
    <location>
        <begin position="33"/>
        <end position="39"/>
    </location>
</feature>
<feature type="repeat" description="3">
    <location>
        <begin position="40"/>
        <end position="46"/>
    </location>
</feature>
<feature type="repeat" description="4">
    <location>
        <begin position="47"/>
        <end position="53"/>
    </location>
</feature>
<feature type="repeat" description="5">
    <location>
        <begin position="54"/>
        <end position="60"/>
    </location>
</feature>
<feature type="repeat" description="6">
    <location>
        <begin position="61"/>
        <end position="67"/>
    </location>
</feature>
<feature type="repeat" description="7">
    <location>
        <begin position="68"/>
        <end position="74"/>
    </location>
</feature>
<feature type="repeat" description="8">
    <location>
        <begin position="75"/>
        <end position="81"/>
    </location>
</feature>
<feature type="repeat" description="9">
    <location>
        <begin position="82"/>
        <end position="88"/>
    </location>
</feature>
<feature type="repeat" description="10">
    <location>
        <begin position="89"/>
        <end position="95"/>
    </location>
</feature>
<feature type="repeat" description="11">
    <location>
        <begin position="96"/>
        <end position="102"/>
    </location>
</feature>
<feature type="repeat" description="12">
    <location>
        <begin position="103"/>
        <end position="109"/>
    </location>
</feature>
<feature type="repeat" description="13">
    <location>
        <begin position="110"/>
        <end position="116"/>
    </location>
</feature>
<feature type="repeat" description="14">
    <location>
        <begin position="117"/>
        <end position="123"/>
    </location>
</feature>
<feature type="repeat" description="15">
    <location>
        <begin position="124"/>
        <end position="130"/>
    </location>
</feature>
<feature type="repeat" description="16">
    <location>
        <begin position="131"/>
        <end position="137"/>
    </location>
</feature>
<feature type="repeat" description="17">
    <location>
        <begin position="138"/>
        <end position="144"/>
    </location>
</feature>
<feature type="repeat" description="18">
    <location>
        <begin position="145"/>
        <end position="151"/>
    </location>
</feature>
<feature type="repeat" description="19">
    <location>
        <begin position="152"/>
        <end position="158"/>
    </location>
</feature>
<feature type="repeat" description="20">
    <location>
        <begin position="159"/>
        <end position="165"/>
    </location>
</feature>
<feature type="repeat" description="21">
    <location>
        <begin position="166"/>
        <end position="172"/>
    </location>
</feature>
<feature type="repeat" description="22; approximate">
    <location>
        <begin position="173"/>
        <end position="179"/>
    </location>
</feature>
<feature type="region of interest" description="22 X 7 AA approximate tandem repeats of T-[ETK]-[PT]-P-[RKT]-C-[ERK]">
    <location>
        <begin position="26"/>
        <end position="179"/>
    </location>
</feature>
<feature type="region of interest" description="Disordered" evidence="2">
    <location>
        <begin position="26"/>
        <end position="84"/>
    </location>
</feature>
<feature type="region of interest" description="Disordered" evidence="2">
    <location>
        <begin position="141"/>
        <end position="218"/>
    </location>
</feature>
<feature type="region of interest" description="Disordered" evidence="2">
    <location>
        <begin position="243"/>
        <end position="297"/>
    </location>
</feature>
<feature type="compositionally biased region" description="Basic and acidic residues" evidence="2">
    <location>
        <begin position="27"/>
        <end position="58"/>
    </location>
</feature>
<feature type="compositionally biased region" description="Low complexity" evidence="2">
    <location>
        <begin position="59"/>
        <end position="84"/>
    </location>
</feature>
<feature type="compositionally biased region" description="Low complexity" evidence="2">
    <location>
        <begin position="141"/>
        <end position="174"/>
    </location>
</feature>
<feature type="compositionally biased region" description="Basic residues" evidence="2">
    <location>
        <begin position="181"/>
        <end position="208"/>
    </location>
</feature>
<feature type="compositionally biased region" description="Basic residues" evidence="2">
    <location>
        <begin position="282"/>
        <end position="291"/>
    </location>
</feature>
<feature type="sequence variant" description="In strain: Samarkand-pk1.">
    <original>T</original>
    <variation>A</variation>
    <location>
        <position position="62"/>
    </location>
</feature>
<feature type="sequence variant" description="In strain: Berkeley.">
    <original>P</original>
    <variation>A</variation>
    <location>
        <position position="106"/>
    </location>
</feature>
<feature type="sequence variant" description="In strain: Samarkand-pk1.">
    <location>
        <begin position="119"/>
        <end position="125"/>
    </location>
</feature>
<feature type="sequence variant" description="In strain: Berkeley.">
    <original>T</original>
    <variation>A</variation>
    <location>
        <position position="159"/>
    </location>
</feature>
<feature type="sequence variant" description="In strain: Berkeley.">
    <original>C</original>
    <variation>S</variation>
    <location>
        <position position="177"/>
    </location>
</feature>
<feature type="sequence variant" description="In strain: Karsnas.">
    <original>HHHNR</original>
    <variation>LILPT</variation>
    <location>
        <begin position="204"/>
        <end position="208"/>
    </location>
</feature>
<feature type="sequence variant" description="In strain: Karsnas.">
    <location>
        <begin position="209"/>
        <end position="297"/>
    </location>
</feature>
<feature type="sequence variant" description="In strain: Berkeley and Oregon-R(2/10).">
    <original>P</original>
    <variation>S</variation>
    <location>
        <position position="247"/>
    </location>
</feature>
<feature type="sequence variant" description="In strain: Berkeley, Oregon-R and Oregon-R(2/10).">
    <original>P</original>
    <variation>S</variation>
    <location>
        <position position="249"/>
    </location>
</feature>
<feature type="sequence variant" description="In strain: Berkeley, Oregon-R and Oregon-R(2/10).">
    <original>S</original>
    <variation>SCKPA</variation>
    <location>
        <position position="252"/>
    </location>
</feature>
<feature type="sequence variant" description="In strain: Samarkand-pSW9.">
    <original>S</original>
    <variation>SRKPS</variation>
    <location>
        <position position="252"/>
    </location>
</feature>
<feature type="sequence variant" description="In strain: Berkeley, Oregon-R and Oregon-R(2/10).">
    <original>T</original>
    <variation>A</variation>
    <location>
        <position position="267"/>
    </location>
</feature>
<feature type="sequence variant" description="In strain: Oregon-R.">
    <original>A</original>
    <variation>V</variation>
    <location>
        <position position="275"/>
    </location>
</feature>
<feature type="sequence conflict" description="In Ref. 6; AAA28887/AAA28889/AAA28891." evidence="3" ref="6">
    <original>KRHRT</original>
    <variation>SDTAQ</variation>
    <location>
        <begin position="186"/>
        <end position="190"/>
    </location>
</feature>
<reference key="1">
    <citation type="journal article" date="1992" name="Biochim. Biophys. Acta">
        <title>Molecular characterization of a Drosophila melanogaster variant strain defective in the Sgs-4 gene dosage compensation.</title>
        <authorList>
            <person name="Furia M."/>
            <person name="Digilio F.A."/>
            <person name="Artiaco D."/>
            <person name="Favia G."/>
            <person name="Polito L.C."/>
        </authorList>
    </citation>
    <scope>NUCLEOTIDE SEQUENCE [GENOMIC DNA]</scope>
    <source>
        <strain>Karsnas</strain>
        <strain>Oregon-R</strain>
        <strain>Samarkand-pk1</strain>
    </source>
</reference>
<reference key="2">
    <citation type="submission" date="1995-03" db="EMBL/GenBank/DDBJ databases">
        <title>Identification of cis-acting elements for dosage compensation in Drosophila melanogaster by statistical analysis.</title>
        <authorList>
            <person name="Siegmund T."/>
            <person name="Korge G."/>
        </authorList>
    </citation>
    <scope>NUCLEOTIDE SEQUENCE [GENOMIC DNA]</scope>
    <source>
        <strain>Oregon-R(2/10)</strain>
        <strain>Samarkand-pSW9</strain>
    </source>
</reference>
<reference key="3">
    <citation type="journal article" date="2000" name="Science">
        <title>The genome sequence of Drosophila melanogaster.</title>
        <authorList>
            <person name="Adams M.D."/>
            <person name="Celniker S.E."/>
            <person name="Holt R.A."/>
            <person name="Evans C.A."/>
            <person name="Gocayne J.D."/>
            <person name="Amanatides P.G."/>
            <person name="Scherer S.E."/>
            <person name="Li P.W."/>
            <person name="Hoskins R.A."/>
            <person name="Galle R.F."/>
            <person name="George R.A."/>
            <person name="Lewis S.E."/>
            <person name="Richards S."/>
            <person name="Ashburner M."/>
            <person name="Henderson S.N."/>
            <person name="Sutton G.G."/>
            <person name="Wortman J.R."/>
            <person name="Yandell M.D."/>
            <person name="Zhang Q."/>
            <person name="Chen L.X."/>
            <person name="Brandon R.C."/>
            <person name="Rogers Y.-H.C."/>
            <person name="Blazej R.G."/>
            <person name="Champe M."/>
            <person name="Pfeiffer B.D."/>
            <person name="Wan K.H."/>
            <person name="Doyle C."/>
            <person name="Baxter E.G."/>
            <person name="Helt G."/>
            <person name="Nelson C.R."/>
            <person name="Miklos G.L.G."/>
            <person name="Abril J.F."/>
            <person name="Agbayani A."/>
            <person name="An H.-J."/>
            <person name="Andrews-Pfannkoch C."/>
            <person name="Baldwin D."/>
            <person name="Ballew R.M."/>
            <person name="Basu A."/>
            <person name="Baxendale J."/>
            <person name="Bayraktaroglu L."/>
            <person name="Beasley E.M."/>
            <person name="Beeson K.Y."/>
            <person name="Benos P.V."/>
            <person name="Berman B.P."/>
            <person name="Bhandari D."/>
            <person name="Bolshakov S."/>
            <person name="Borkova D."/>
            <person name="Botchan M.R."/>
            <person name="Bouck J."/>
            <person name="Brokstein P."/>
            <person name="Brottier P."/>
            <person name="Burtis K.C."/>
            <person name="Busam D.A."/>
            <person name="Butler H."/>
            <person name="Cadieu E."/>
            <person name="Center A."/>
            <person name="Chandra I."/>
            <person name="Cherry J.M."/>
            <person name="Cawley S."/>
            <person name="Dahlke C."/>
            <person name="Davenport L.B."/>
            <person name="Davies P."/>
            <person name="de Pablos B."/>
            <person name="Delcher A."/>
            <person name="Deng Z."/>
            <person name="Mays A.D."/>
            <person name="Dew I."/>
            <person name="Dietz S.M."/>
            <person name="Dodson K."/>
            <person name="Doup L.E."/>
            <person name="Downes M."/>
            <person name="Dugan-Rocha S."/>
            <person name="Dunkov B.C."/>
            <person name="Dunn P."/>
            <person name="Durbin K.J."/>
            <person name="Evangelista C.C."/>
            <person name="Ferraz C."/>
            <person name="Ferriera S."/>
            <person name="Fleischmann W."/>
            <person name="Fosler C."/>
            <person name="Gabrielian A.E."/>
            <person name="Garg N.S."/>
            <person name="Gelbart W.M."/>
            <person name="Glasser K."/>
            <person name="Glodek A."/>
            <person name="Gong F."/>
            <person name="Gorrell J.H."/>
            <person name="Gu Z."/>
            <person name="Guan P."/>
            <person name="Harris M."/>
            <person name="Harris N.L."/>
            <person name="Harvey D.A."/>
            <person name="Heiman T.J."/>
            <person name="Hernandez J.R."/>
            <person name="Houck J."/>
            <person name="Hostin D."/>
            <person name="Houston K.A."/>
            <person name="Howland T.J."/>
            <person name="Wei M.-H."/>
            <person name="Ibegwam C."/>
            <person name="Jalali M."/>
            <person name="Kalush F."/>
            <person name="Karpen G.H."/>
            <person name="Ke Z."/>
            <person name="Kennison J.A."/>
            <person name="Ketchum K.A."/>
            <person name="Kimmel B.E."/>
            <person name="Kodira C.D."/>
            <person name="Kraft C.L."/>
            <person name="Kravitz S."/>
            <person name="Kulp D."/>
            <person name="Lai Z."/>
            <person name="Lasko P."/>
            <person name="Lei Y."/>
            <person name="Levitsky A.A."/>
            <person name="Li J.H."/>
            <person name="Li Z."/>
            <person name="Liang Y."/>
            <person name="Lin X."/>
            <person name="Liu X."/>
            <person name="Mattei B."/>
            <person name="McIntosh T.C."/>
            <person name="McLeod M.P."/>
            <person name="McPherson D."/>
            <person name="Merkulov G."/>
            <person name="Milshina N.V."/>
            <person name="Mobarry C."/>
            <person name="Morris J."/>
            <person name="Moshrefi A."/>
            <person name="Mount S.M."/>
            <person name="Moy M."/>
            <person name="Murphy B."/>
            <person name="Murphy L."/>
            <person name="Muzny D.M."/>
            <person name="Nelson D.L."/>
            <person name="Nelson D.R."/>
            <person name="Nelson K.A."/>
            <person name="Nixon K."/>
            <person name="Nusskern D.R."/>
            <person name="Pacleb J.M."/>
            <person name="Palazzolo M."/>
            <person name="Pittman G.S."/>
            <person name="Pan S."/>
            <person name="Pollard J."/>
            <person name="Puri V."/>
            <person name="Reese M.G."/>
            <person name="Reinert K."/>
            <person name="Remington K."/>
            <person name="Saunders R.D.C."/>
            <person name="Scheeler F."/>
            <person name="Shen H."/>
            <person name="Shue B.C."/>
            <person name="Siden-Kiamos I."/>
            <person name="Simpson M."/>
            <person name="Skupski M.P."/>
            <person name="Smith T.J."/>
            <person name="Spier E."/>
            <person name="Spradling A.C."/>
            <person name="Stapleton M."/>
            <person name="Strong R."/>
            <person name="Sun E."/>
            <person name="Svirskas R."/>
            <person name="Tector C."/>
            <person name="Turner R."/>
            <person name="Venter E."/>
            <person name="Wang A.H."/>
            <person name="Wang X."/>
            <person name="Wang Z.-Y."/>
            <person name="Wassarman D.A."/>
            <person name="Weinstock G.M."/>
            <person name="Weissenbach J."/>
            <person name="Williams S.M."/>
            <person name="Woodage T."/>
            <person name="Worley K.C."/>
            <person name="Wu D."/>
            <person name="Yang S."/>
            <person name="Yao Q.A."/>
            <person name="Ye J."/>
            <person name="Yeh R.-F."/>
            <person name="Zaveri J.S."/>
            <person name="Zhan M."/>
            <person name="Zhang G."/>
            <person name="Zhao Q."/>
            <person name="Zheng L."/>
            <person name="Zheng X.H."/>
            <person name="Zhong F.N."/>
            <person name="Zhong W."/>
            <person name="Zhou X."/>
            <person name="Zhu S.C."/>
            <person name="Zhu X."/>
            <person name="Smith H.O."/>
            <person name="Gibbs R.A."/>
            <person name="Myers E.W."/>
            <person name="Rubin G.M."/>
            <person name="Venter J.C."/>
        </authorList>
    </citation>
    <scope>NUCLEOTIDE SEQUENCE [LARGE SCALE GENOMIC DNA]</scope>
    <source>
        <strain>Berkeley</strain>
    </source>
</reference>
<reference key="4">
    <citation type="journal article" date="2002" name="Genome Biol.">
        <title>Annotation of the Drosophila melanogaster euchromatic genome: a systematic review.</title>
        <authorList>
            <person name="Misra S."/>
            <person name="Crosby M.A."/>
            <person name="Mungall C.J."/>
            <person name="Matthews B.B."/>
            <person name="Campbell K.S."/>
            <person name="Hradecky P."/>
            <person name="Huang Y."/>
            <person name="Kaminker J.S."/>
            <person name="Millburn G.H."/>
            <person name="Prochnik S.E."/>
            <person name="Smith C.D."/>
            <person name="Tupy J.L."/>
            <person name="Whitfield E.J."/>
            <person name="Bayraktaroglu L."/>
            <person name="Berman B.P."/>
            <person name="Bettencourt B.R."/>
            <person name="Celniker S.E."/>
            <person name="de Grey A.D.N.J."/>
            <person name="Drysdale R.A."/>
            <person name="Harris N.L."/>
            <person name="Richter J."/>
            <person name="Russo S."/>
            <person name="Schroeder A.J."/>
            <person name="Shu S.Q."/>
            <person name="Stapleton M."/>
            <person name="Yamada C."/>
            <person name="Ashburner M."/>
            <person name="Gelbart W.M."/>
            <person name="Rubin G.M."/>
            <person name="Lewis S.E."/>
        </authorList>
    </citation>
    <scope>GENOME REANNOTATION</scope>
    <source>
        <strain>Berkeley</strain>
    </source>
</reference>
<reference key="5">
    <citation type="journal article" date="2000" name="Science">
        <title>From sequence to chromosome: the tip of the X chromosome of D. melanogaster.</title>
        <authorList>
            <person name="Benos P.V."/>
            <person name="Gatt M.K."/>
            <person name="Ashburner M."/>
            <person name="Murphy L."/>
            <person name="Harris D."/>
            <person name="Barrell B.G."/>
            <person name="Ferraz C."/>
            <person name="Vidal S."/>
            <person name="Brun C."/>
            <person name="Demailles J."/>
            <person name="Cadieu E."/>
            <person name="Dreano S."/>
            <person name="Gloux S."/>
            <person name="Lelaure V."/>
            <person name="Mottier S."/>
            <person name="Galibert F."/>
            <person name="Borkova D."/>
            <person name="Minana B."/>
            <person name="Kafatos F.C."/>
            <person name="Louis C."/>
            <person name="Siden-Kiamos I."/>
            <person name="Bolshakov S."/>
            <person name="Papagiannakis G."/>
            <person name="Spanos L."/>
            <person name="Cox S."/>
            <person name="Madueno E."/>
            <person name="de Pablos B."/>
            <person name="Modolell J."/>
            <person name="Peter A."/>
            <person name="Schoettler P."/>
            <person name="Werner M."/>
            <person name="Mourkioti F."/>
            <person name="Beinert N."/>
            <person name="Dowe G."/>
            <person name="Schaefer U."/>
            <person name="Jaeckle H."/>
            <person name="Bucheton A."/>
            <person name="Callister D.M."/>
            <person name="Campbell L.A."/>
            <person name="Darlamitsou A."/>
            <person name="Henderson N.S."/>
            <person name="McMillan P.J."/>
            <person name="Salles C."/>
            <person name="Tait E.A."/>
            <person name="Valenti P."/>
            <person name="Saunders R.D.C."/>
            <person name="Glover D.M."/>
        </authorList>
    </citation>
    <scope>NUCLEOTIDE SEQUENCE [LARGE SCALE GENOMIC DNA]</scope>
    <source>
        <strain>Oregon-R</strain>
    </source>
</reference>
<reference key="6">
    <citation type="journal article" date="1982" name="Cell">
        <title>An expandable gene that encodes a Drosophila glue protein is not expressed in variants lacking remote upstream sequences.</title>
        <authorList>
            <person name="Muskavitch M.A.T."/>
            <person name="Hogness D.S."/>
        </authorList>
    </citation>
    <scope>NUCLEOTIDE SEQUENCE [GENOMIC DNA] OF 1-86 AND 121-190</scope>
</reference>
<evidence type="ECO:0000255" key="1"/>
<evidence type="ECO:0000256" key="2">
    <source>
        <dbReference type="SAM" id="MobiDB-lite"/>
    </source>
</evidence>
<evidence type="ECO:0000305" key="3"/>
<dbReference type="EMBL" id="X61943">
    <property type="protein sequence ID" value="CAA43949.1"/>
    <property type="molecule type" value="Genomic_DNA"/>
</dbReference>
<dbReference type="EMBL" id="X61942">
    <property type="protein sequence ID" value="CAA43948.1"/>
    <property type="molecule type" value="Genomic_DNA"/>
</dbReference>
<dbReference type="EMBL" id="X61944">
    <property type="protein sequence ID" value="CAA43950.1"/>
    <property type="molecule type" value="Genomic_DNA"/>
</dbReference>
<dbReference type="EMBL" id="Z48721">
    <property type="protein sequence ID" value="CAA88613.1"/>
    <property type="molecule type" value="Genomic_DNA"/>
</dbReference>
<dbReference type="EMBL" id="Z48722">
    <property type="protein sequence ID" value="CAA88614.1"/>
    <property type="molecule type" value="Genomic_DNA"/>
</dbReference>
<dbReference type="EMBL" id="AE014298">
    <property type="protein sequence ID" value="AAF45860.2"/>
    <property type="status" value="ALT_INIT"/>
    <property type="molecule type" value="Genomic_DNA"/>
</dbReference>
<dbReference type="EMBL" id="AL024484">
    <property type="protein sequence ID" value="CAA19673.1"/>
    <property type="molecule type" value="Genomic_DNA"/>
</dbReference>
<dbReference type="EMBL" id="J01129">
    <property type="protein sequence ID" value="AAA28886.1"/>
    <property type="molecule type" value="Genomic_DNA"/>
</dbReference>
<dbReference type="EMBL" id="J01130">
    <property type="protein sequence ID" value="AAA28887.1"/>
    <property type="molecule type" value="Genomic_DNA"/>
</dbReference>
<dbReference type="EMBL" id="J01133">
    <property type="protein sequence ID" value="AAA28888.1"/>
    <property type="molecule type" value="Genomic_DNA"/>
</dbReference>
<dbReference type="EMBL" id="J01134">
    <property type="protein sequence ID" value="AAA28889.1"/>
    <property type="molecule type" value="Genomic_DNA"/>
</dbReference>
<dbReference type="EMBL" id="J01135">
    <property type="protein sequence ID" value="AAA28890.1"/>
    <property type="molecule type" value="Genomic_DNA"/>
</dbReference>
<dbReference type="EMBL" id="J01136">
    <property type="protein sequence ID" value="AAA28891.1"/>
    <property type="molecule type" value="Genomic_DNA"/>
</dbReference>
<dbReference type="PIR" id="S21085">
    <property type="entry name" value="S21085"/>
</dbReference>
<dbReference type="PIR" id="S29893">
    <property type="entry name" value="S29893"/>
</dbReference>
<dbReference type="RefSeq" id="NP_476717.4">
    <property type="nucleotide sequence ID" value="NM_057369.4"/>
</dbReference>
<dbReference type="FunCoup" id="Q00725">
    <property type="interactions" value="2"/>
</dbReference>
<dbReference type="STRING" id="7227.FBpp0312344"/>
<dbReference type="PaxDb" id="7227-FBpp0070500"/>
<dbReference type="EnsemblMetazoa" id="FBtr0346736">
    <property type="protein sequence ID" value="FBpp0312344"/>
    <property type="gene ID" value="FBgn0003374"/>
</dbReference>
<dbReference type="GeneID" id="31304"/>
<dbReference type="KEGG" id="dme:Dmel_CG12181"/>
<dbReference type="AGR" id="FB:FBgn0003374"/>
<dbReference type="CTD" id="31304"/>
<dbReference type="FlyBase" id="FBgn0003374">
    <property type="gene designation" value="Sgs4"/>
</dbReference>
<dbReference type="VEuPathDB" id="VectorBase:FBgn0003374"/>
<dbReference type="GeneTree" id="ENSGT01130000280456"/>
<dbReference type="HOGENOM" id="CLU_970667_0_0_1"/>
<dbReference type="InParanoid" id="Q00725"/>
<dbReference type="BioGRID-ORCS" id="31304">
    <property type="hits" value="0 hits in 1 CRISPR screen"/>
</dbReference>
<dbReference type="GenomeRNAi" id="31304"/>
<dbReference type="PRO" id="PR:Q00725"/>
<dbReference type="Proteomes" id="UP000000803">
    <property type="component" value="Chromosome X"/>
</dbReference>
<dbReference type="Bgee" id="FBgn0003374">
    <property type="expression patterns" value="Expressed in saliva-secreting gland and 18 other cell types or tissues"/>
</dbReference>
<dbReference type="GO" id="GO:0005576">
    <property type="term" value="C:extracellular region"/>
    <property type="evidence" value="ECO:0000314"/>
    <property type="project" value="FlyBase"/>
</dbReference>
<dbReference type="GO" id="GO:0140073">
    <property type="term" value="F:bioadhesive activity"/>
    <property type="evidence" value="ECO:0000269"/>
    <property type="project" value="FlyBase"/>
</dbReference>
<dbReference type="GO" id="GO:0007594">
    <property type="term" value="P:puparial adhesion"/>
    <property type="evidence" value="ECO:0000270"/>
    <property type="project" value="FlyBase"/>
</dbReference>
<dbReference type="PRINTS" id="PR01217">
    <property type="entry name" value="PRICHEXTENSN"/>
</dbReference>
<proteinExistence type="evidence at transcript level"/>
<comment type="subcellular location">
    <subcellularLocation>
        <location evidence="3">Secreted</location>
    </subcellularLocation>
</comment>
<comment type="tissue specificity">
    <text>Salivary gland.</text>
</comment>
<comment type="polymorphism">
    <text>The sequence shown is that from strain Oregon-R. The number of the 7 residues repeat vary between strains: strain Oregon-R(2/10) has 11 more copies, strain Karsnas has 8 more copies of the repeat, strain Samarkand-pk1 has 1 less copy and strain Samarkand-pSW9 and strain Berkeley have 2 less copies.</text>
</comment>
<comment type="sequence caution" evidence="3">
    <conflict type="erroneous initiation">
        <sequence resource="EMBL-CDS" id="AAF45860"/>
    </conflict>
</comment>
<protein>
    <recommendedName>
        <fullName>Salivary glue protein Sgs-4</fullName>
    </recommendedName>
</protein>
<organism>
    <name type="scientific">Drosophila melanogaster</name>
    <name type="common">Fruit fly</name>
    <dbReference type="NCBI Taxonomy" id="7227"/>
    <lineage>
        <taxon>Eukaryota</taxon>
        <taxon>Metazoa</taxon>
        <taxon>Ecdysozoa</taxon>
        <taxon>Arthropoda</taxon>
        <taxon>Hexapoda</taxon>
        <taxon>Insecta</taxon>
        <taxon>Pterygota</taxon>
        <taxon>Neoptera</taxon>
        <taxon>Endopterygota</taxon>
        <taxon>Diptera</taxon>
        <taxon>Brachycera</taxon>
        <taxon>Muscomorpha</taxon>
        <taxon>Ephydroidea</taxon>
        <taxon>Drosophilidae</taxon>
        <taxon>Drosophila</taxon>
        <taxon>Sophophora</taxon>
    </lineage>
</organism>
<keyword id="KW-1185">Reference proteome</keyword>
<keyword id="KW-0677">Repeat</keyword>
<keyword id="KW-0964">Secreted</keyword>
<keyword id="KW-0732">Signal</keyword>
<accession>Q00725</accession>
<accession>O76917</accession>
<accession>Q24438</accession>
<accession>Q24504</accession>
<accession>Q24513</accession>
<accession>Q24514</accession>
<accession>Q24515</accession>
<accession>Q24516</accession>
<accession>Q24517</accession>
<accession>Q7JMJ3</accession>
<accession>Q7JQ97</accession>
<accession>Q7JQ98</accession>
<accession>Q7JQ99</accession>
<accession>Q7JQA0</accession>
<accession>Q7JQA1</accession>
<accession>Q7JQA2</accession>
<accession>Q9W4T2</accession>
<gene>
    <name type="primary">Sgs4</name>
    <name type="synonym">Sgs-4</name>
    <name type="ORF">CG12181</name>
</gene>